<proteinExistence type="inferred from homology"/>
<comment type="function">
    <text evidence="1">Usually encoded in the trnK tRNA gene intron. Probably assists in splicing its own and other chloroplast group II introns.</text>
</comment>
<comment type="subcellular location">
    <subcellularLocation>
        <location>Plastid</location>
        <location>Chloroplast</location>
    </subcellularLocation>
</comment>
<comment type="similarity">
    <text evidence="1">Belongs to the intron maturase 2 family. MatK subfamily.</text>
</comment>
<dbReference type="EMBL" id="AY220438">
    <property type="protein sequence ID" value="AAP02921.1"/>
    <property type="molecule type" value="Genomic_DNA"/>
</dbReference>
<dbReference type="GO" id="GO:0009507">
    <property type="term" value="C:chloroplast"/>
    <property type="evidence" value="ECO:0007669"/>
    <property type="project" value="UniProtKB-SubCell"/>
</dbReference>
<dbReference type="GO" id="GO:0003723">
    <property type="term" value="F:RNA binding"/>
    <property type="evidence" value="ECO:0007669"/>
    <property type="project" value="UniProtKB-KW"/>
</dbReference>
<dbReference type="GO" id="GO:0006397">
    <property type="term" value="P:mRNA processing"/>
    <property type="evidence" value="ECO:0007669"/>
    <property type="project" value="UniProtKB-KW"/>
</dbReference>
<dbReference type="GO" id="GO:0008380">
    <property type="term" value="P:RNA splicing"/>
    <property type="evidence" value="ECO:0007669"/>
    <property type="project" value="UniProtKB-UniRule"/>
</dbReference>
<dbReference type="GO" id="GO:0008033">
    <property type="term" value="P:tRNA processing"/>
    <property type="evidence" value="ECO:0007669"/>
    <property type="project" value="UniProtKB-KW"/>
</dbReference>
<dbReference type="HAMAP" id="MF_01390">
    <property type="entry name" value="MatK"/>
    <property type="match status" value="1"/>
</dbReference>
<dbReference type="InterPro" id="IPR024937">
    <property type="entry name" value="Domain_X"/>
</dbReference>
<dbReference type="InterPro" id="IPR002866">
    <property type="entry name" value="Maturase_MatK"/>
</dbReference>
<dbReference type="InterPro" id="IPR024942">
    <property type="entry name" value="Maturase_MatK_N"/>
</dbReference>
<dbReference type="PANTHER" id="PTHR34811">
    <property type="entry name" value="MATURASE K"/>
    <property type="match status" value="1"/>
</dbReference>
<dbReference type="PANTHER" id="PTHR34811:SF1">
    <property type="entry name" value="MATURASE K"/>
    <property type="match status" value="1"/>
</dbReference>
<dbReference type="Pfam" id="PF01348">
    <property type="entry name" value="Intron_maturas2"/>
    <property type="match status" value="1"/>
</dbReference>
<dbReference type="Pfam" id="PF01824">
    <property type="entry name" value="MatK_N"/>
    <property type="match status" value="1"/>
</dbReference>
<geneLocation type="chloroplast"/>
<sequence length="507" mass="60400">MEELQRHFEIDGSRQQRFIYPFLFQEYIYALAHYYALNGSIFYETVENLGYDKKSSSLIVKRLITRMHRQNRLIISINDSNQNRFIGHNKNLYTQTVSEGFAVIMEIPFSLRLVFSLEEKEISKSHNLRSIHSLFPFFEDKLSHLNHVSHILIPHPAHLEILVQILHCWIQDAPSLHLLRFFLHDYHNSKSINAQKKSIFVCSKENRRFFSFIYNFHVYESELMFVFLRKQSSHLRSTSFGTVLERTHFYGKIEHLVVVLRNDFQKTLWLFKDPFMHYVRYQGKSILASKGTHLRMKKWKSYLVLFWQSHFYLWSQPERIRINQLYNHSFYFLGYLSGVRRNPSVVRSQMLENSFLIETSIKKFETLVPITPLIGSLAKAKFCNVSGHPISKPSWADLSDSDIINRFGRIYRNFSHYHSGSSKKQTLYQIKYILRLSCARTLARKHKSTVRAFLKRLGSKFLEEFLTEEEQVLSLIFPRTPSPSYRSHRERIWYLDIIYINILTNHV</sequence>
<keyword id="KW-0150">Chloroplast</keyword>
<keyword id="KW-0507">mRNA processing</keyword>
<keyword id="KW-0934">Plastid</keyword>
<keyword id="KW-0694">RNA-binding</keyword>
<keyword id="KW-0819">tRNA processing</keyword>
<accession>Q7YM30</accession>
<organism>
    <name type="scientific">Cananga odorata</name>
    <name type="common">Ylang-ylang tree</name>
    <name type="synonym">Uvaria odorata</name>
    <dbReference type="NCBI Taxonomy" id="13393"/>
    <lineage>
        <taxon>Eukaryota</taxon>
        <taxon>Viridiplantae</taxon>
        <taxon>Streptophyta</taxon>
        <taxon>Embryophyta</taxon>
        <taxon>Tracheophyta</taxon>
        <taxon>Spermatophyta</taxon>
        <taxon>Magnoliopsida</taxon>
        <taxon>Magnoliidae</taxon>
        <taxon>Magnoliales</taxon>
        <taxon>Annonaceae</taxon>
        <taxon>Ambavioideae</taxon>
        <taxon>Cananga</taxon>
    </lineage>
</organism>
<evidence type="ECO:0000255" key="1">
    <source>
        <dbReference type="HAMAP-Rule" id="MF_01390"/>
    </source>
</evidence>
<name>MATK_CANOD</name>
<reference key="1">
    <citation type="journal article" date="2003" name="Bot. J. Linn. Soc.">
        <title>Phylogenetic analysis of Magnoliales and Myristicaceae based on multiple data sets: implications for character evolution.</title>
        <authorList>
            <person name="Sauquet H."/>
            <person name="Doyle J.A."/>
            <person name="Scharaschkin T."/>
            <person name="Borsch T."/>
            <person name="Hilu K.W."/>
            <person name="Chatrou L.W."/>
            <person name="Le Thomas A."/>
        </authorList>
    </citation>
    <scope>NUCLEOTIDE SEQUENCE [GENOMIC DNA]</scope>
</reference>
<protein>
    <recommendedName>
        <fullName evidence="1">Maturase K</fullName>
    </recommendedName>
    <alternativeName>
        <fullName evidence="1">Intron maturase</fullName>
    </alternativeName>
</protein>
<feature type="chain" id="PRO_0000143306" description="Maturase K">
    <location>
        <begin position="1"/>
        <end position="507"/>
    </location>
</feature>
<gene>
    <name evidence="1" type="primary">matK</name>
</gene>